<proteinExistence type="evidence at protein level"/>
<sequence>MSSNSSQAPPNGTPGPFDGPQWPYQAPQSTYVGVAVLMGTVVACASVVNGLVIVVSICYKKLRSPLNYILVNLAVADLLVTLCGSSVSLSNNINGFFVFGRRMCELEGFMVSLTGIVGLWSLAILALERYVVVCKPLGDFQFQRRHAVSGCAFTWGWALLWSAPPLLGWSSYVPEGLRTSCGPNWYTGGSNNNSYILSLFVTCFVLPLSLILFSYTNLLLTLRAAAAQQKEADTTQRAEREVTRMVIVMVMAFLLCWLPYSTFALVVATHKGIIIQPVLASLPSYFSKTATVYNPIIYVFMNKQFQSCLLEMLCCGYQPQRTGKASPGTPGPHADVTAAGLRNKVMPAHPV</sequence>
<name>OPSP_CHICK</name>
<keyword id="KW-0157">Chromophore</keyword>
<keyword id="KW-1015">Disulfide bond</keyword>
<keyword id="KW-0297">G-protein coupled receptor</keyword>
<keyword id="KW-0325">Glycoprotein</keyword>
<keyword id="KW-0449">Lipoprotein</keyword>
<keyword id="KW-0472">Membrane</keyword>
<keyword id="KW-0564">Palmitate</keyword>
<keyword id="KW-0597">Phosphoprotein</keyword>
<keyword id="KW-0600">Photoreceptor protein</keyword>
<keyword id="KW-0675">Receptor</keyword>
<keyword id="KW-1185">Reference proteome</keyword>
<keyword id="KW-0681">Retinal protein</keyword>
<keyword id="KW-0716">Sensory transduction</keyword>
<keyword id="KW-0807">Transducer</keyword>
<keyword id="KW-0812">Transmembrane</keyword>
<keyword id="KW-1133">Transmembrane helix</keyword>
<protein>
    <recommendedName>
        <fullName>Pinopsin</fullName>
    </recommendedName>
    <alternativeName>
        <fullName>Pineal gland-specific opsin</fullName>
        <shortName>P-opsin</shortName>
        <shortName>Pineal opsin</shortName>
    </alternativeName>
</protein>
<comment type="function">
    <text>Produces a slow and prolonged phototransduction response consistent with the non-visual function of pineal photoreception.</text>
</comment>
<comment type="biophysicochemical properties">
    <absorption>
        <max>~470 nm</max>
    </absorption>
</comment>
<comment type="subcellular location">
    <subcellularLocation>
        <location>Membrane</location>
        <topology>Multi-pass membrane protein</topology>
    </subcellularLocation>
</comment>
<comment type="tissue specificity">
    <text>Pineal gland.</text>
</comment>
<comment type="PTM">
    <text evidence="1">Phosphorylated on some or all of the serine and threonine residues present in the C-terminal region.</text>
</comment>
<comment type="similarity">
    <text evidence="3">Belongs to the G-protein coupled receptor 1 family. Opsin subfamily.</text>
</comment>
<reference key="1">
    <citation type="journal article" date="1995" name="Science">
        <title>Pineal opsin: a nonvisual opsin expressed in chick pineal.</title>
        <authorList>
            <person name="Max M."/>
            <person name="McKinnon P.J."/>
            <person name="Seidenman K.J."/>
            <person name="Barrett R.K."/>
            <person name="Applebury M.L."/>
            <person name="Takahashi J.S."/>
            <person name="Margolskee R.F."/>
        </authorList>
    </citation>
    <scope>NUCLEOTIDE SEQUENCE</scope>
    <source>
        <tissue>Pineal gland</tissue>
    </source>
</reference>
<reference key="2">
    <citation type="journal article" date="1994" name="Nature">
        <title>Pinopsin is a chicken pineal photoreceptive molecule.</title>
        <authorList>
            <person name="Okano T."/>
            <person name="Yoshizawa T."/>
            <person name="Fukada Y."/>
        </authorList>
    </citation>
    <scope>NUCLEOTIDE SEQUENCE [MRNA]</scope>
    <source>
        <tissue>Pineal gland</tissue>
    </source>
</reference>
<reference key="3">
    <citation type="journal article" date="1998" name="J. Biol. Chem.">
        <title>Light-dependent activation of rod transducin by pineal opsin.</title>
        <authorList>
            <person name="Max M."/>
            <person name="Surya A."/>
            <person name="Takahashi J.S."/>
            <person name="Margolskee R.F."/>
            <person name="Knox B.E."/>
        </authorList>
    </citation>
    <scope>NUCLEOTIDE SEQUENCE [GENOMIC DNA]</scope>
    <source>
        <strain>White leghorn</strain>
        <tissue>Pineal gland</tissue>
    </source>
</reference>
<dbReference type="EMBL" id="U15762">
    <property type="protein sequence ID" value="AAA64223.1"/>
    <property type="molecule type" value="mRNA"/>
</dbReference>
<dbReference type="EMBL" id="U87449">
    <property type="protein sequence ID" value="AAB47565.1"/>
    <property type="molecule type" value="Genomic_DNA"/>
</dbReference>
<dbReference type="PIR" id="A55962">
    <property type="entry name" value="A55962"/>
</dbReference>
<dbReference type="RefSeq" id="NP_990740.1">
    <property type="nucleotide sequence ID" value="NM_205409.2"/>
</dbReference>
<dbReference type="SMR" id="P51475"/>
<dbReference type="FunCoup" id="P51475">
    <property type="interactions" value="109"/>
</dbReference>
<dbReference type="STRING" id="9031.ENSGALP00000007864"/>
<dbReference type="GlyGen" id="P51475">
    <property type="glycosylation" value="4 sites"/>
</dbReference>
<dbReference type="PaxDb" id="9031-ENSGALP00000007864"/>
<dbReference type="GeneID" id="396377"/>
<dbReference type="KEGG" id="gga:396377"/>
<dbReference type="CTD" id="396377"/>
<dbReference type="VEuPathDB" id="HostDB:geneid_396377"/>
<dbReference type="eggNOG" id="KOG3656">
    <property type="taxonomic scope" value="Eukaryota"/>
</dbReference>
<dbReference type="HOGENOM" id="CLU_009579_3_0_1"/>
<dbReference type="InParanoid" id="P51475"/>
<dbReference type="OrthoDB" id="6142583at2759"/>
<dbReference type="PhylomeDB" id="P51475"/>
<dbReference type="TreeFam" id="TF324998"/>
<dbReference type="PRO" id="PR:P51475"/>
<dbReference type="Proteomes" id="UP000000539">
    <property type="component" value="Unassembled WGS sequence"/>
</dbReference>
<dbReference type="GO" id="GO:0036064">
    <property type="term" value="C:ciliary basal body"/>
    <property type="evidence" value="ECO:0000314"/>
    <property type="project" value="AgBase"/>
</dbReference>
<dbReference type="GO" id="GO:0042599">
    <property type="term" value="C:lamellar body"/>
    <property type="evidence" value="ECO:0000314"/>
    <property type="project" value="AgBase"/>
</dbReference>
<dbReference type="GO" id="GO:0097232">
    <property type="term" value="C:lamellar body membrane"/>
    <property type="evidence" value="ECO:0000314"/>
    <property type="project" value="AgBase"/>
</dbReference>
<dbReference type="GO" id="GO:0016020">
    <property type="term" value="C:membrane"/>
    <property type="evidence" value="ECO:0000314"/>
    <property type="project" value="AgBase"/>
</dbReference>
<dbReference type="GO" id="GO:0001750">
    <property type="term" value="C:photoreceptor outer segment"/>
    <property type="evidence" value="ECO:0000318"/>
    <property type="project" value="GO_Central"/>
</dbReference>
<dbReference type="GO" id="GO:0005886">
    <property type="term" value="C:plasma membrane"/>
    <property type="evidence" value="ECO:0000318"/>
    <property type="project" value="GO_Central"/>
</dbReference>
<dbReference type="GO" id="GO:0008020">
    <property type="term" value="F:G protein-coupled photoreceptor activity"/>
    <property type="evidence" value="ECO:0000318"/>
    <property type="project" value="GO_Central"/>
</dbReference>
<dbReference type="GO" id="GO:0016038">
    <property type="term" value="P:absorption of visible light"/>
    <property type="evidence" value="ECO:0000314"/>
    <property type="project" value="AgBase"/>
</dbReference>
<dbReference type="GO" id="GO:0071482">
    <property type="term" value="P:cellular response to light stimulus"/>
    <property type="evidence" value="ECO:0000318"/>
    <property type="project" value="GO_Central"/>
</dbReference>
<dbReference type="GO" id="GO:0007186">
    <property type="term" value="P:G protein-coupled receptor signaling pathway"/>
    <property type="evidence" value="ECO:0000318"/>
    <property type="project" value="GO_Central"/>
</dbReference>
<dbReference type="GO" id="GO:0007602">
    <property type="term" value="P:phototransduction"/>
    <property type="evidence" value="ECO:0000318"/>
    <property type="project" value="GO_Central"/>
</dbReference>
<dbReference type="GO" id="GO:0007601">
    <property type="term" value="P:visual perception"/>
    <property type="evidence" value="ECO:0007669"/>
    <property type="project" value="InterPro"/>
</dbReference>
<dbReference type="FunFam" id="1.20.1070.10:FF:000018">
    <property type="entry name" value="Rhodopsin"/>
    <property type="match status" value="1"/>
</dbReference>
<dbReference type="Gene3D" id="1.20.1070.10">
    <property type="entry name" value="Rhodopsin 7-helix transmembrane proteins"/>
    <property type="match status" value="1"/>
</dbReference>
<dbReference type="InterPro" id="IPR050125">
    <property type="entry name" value="GPCR_opsins"/>
</dbReference>
<dbReference type="InterPro" id="IPR000276">
    <property type="entry name" value="GPCR_Rhodpsn"/>
</dbReference>
<dbReference type="InterPro" id="IPR017452">
    <property type="entry name" value="GPCR_Rhodpsn_7TM"/>
</dbReference>
<dbReference type="InterPro" id="IPR001760">
    <property type="entry name" value="Opsin"/>
</dbReference>
<dbReference type="InterPro" id="IPR002206">
    <property type="entry name" value="Opsin_pineal"/>
</dbReference>
<dbReference type="InterPro" id="IPR027430">
    <property type="entry name" value="Retinal_BS"/>
</dbReference>
<dbReference type="PANTHER" id="PTHR24240">
    <property type="entry name" value="OPSIN"/>
    <property type="match status" value="1"/>
</dbReference>
<dbReference type="Pfam" id="PF00001">
    <property type="entry name" value="7tm_1"/>
    <property type="match status" value="1"/>
</dbReference>
<dbReference type="PRINTS" id="PR00237">
    <property type="entry name" value="GPCRRHODOPSN"/>
</dbReference>
<dbReference type="PRINTS" id="PR00238">
    <property type="entry name" value="OPSIN"/>
</dbReference>
<dbReference type="PRINTS" id="PR00666">
    <property type="entry name" value="PINOPSIN"/>
</dbReference>
<dbReference type="SUPFAM" id="SSF81321">
    <property type="entry name" value="Family A G protein-coupled receptor-like"/>
    <property type="match status" value="1"/>
</dbReference>
<dbReference type="PROSITE" id="PS00237">
    <property type="entry name" value="G_PROTEIN_RECEP_F1_1"/>
    <property type="match status" value="1"/>
</dbReference>
<dbReference type="PROSITE" id="PS50262">
    <property type="entry name" value="G_PROTEIN_RECEP_F1_2"/>
    <property type="match status" value="1"/>
</dbReference>
<dbReference type="PROSITE" id="PS00238">
    <property type="entry name" value="OPSIN"/>
    <property type="match status" value="1"/>
</dbReference>
<accession>P51475</accession>
<accession>P79794</accession>
<evidence type="ECO:0000250" key="1"/>
<evidence type="ECO:0000255" key="2"/>
<evidence type="ECO:0000255" key="3">
    <source>
        <dbReference type="PROSITE-ProRule" id="PRU00521"/>
    </source>
</evidence>
<evidence type="ECO:0000305" key="4"/>
<organism>
    <name type="scientific">Gallus gallus</name>
    <name type="common">Chicken</name>
    <dbReference type="NCBI Taxonomy" id="9031"/>
    <lineage>
        <taxon>Eukaryota</taxon>
        <taxon>Metazoa</taxon>
        <taxon>Chordata</taxon>
        <taxon>Craniata</taxon>
        <taxon>Vertebrata</taxon>
        <taxon>Euteleostomi</taxon>
        <taxon>Archelosauria</taxon>
        <taxon>Archosauria</taxon>
        <taxon>Dinosauria</taxon>
        <taxon>Saurischia</taxon>
        <taxon>Theropoda</taxon>
        <taxon>Coelurosauria</taxon>
        <taxon>Aves</taxon>
        <taxon>Neognathae</taxon>
        <taxon>Galloanserae</taxon>
        <taxon>Galliformes</taxon>
        <taxon>Phasianidae</taxon>
        <taxon>Phasianinae</taxon>
        <taxon>Gallus</taxon>
    </lineage>
</organism>
<feature type="chain" id="PRO_0000197807" description="Pinopsin">
    <location>
        <begin position="1"/>
        <end position="351"/>
    </location>
</feature>
<feature type="topological domain" description="Extracellular">
    <location>
        <begin position="1"/>
        <end position="30"/>
    </location>
</feature>
<feature type="transmembrane region" description="Helical; Name=1" evidence="2">
    <location>
        <begin position="31"/>
        <end position="55"/>
    </location>
</feature>
<feature type="topological domain" description="Cytoplasmic">
    <location>
        <begin position="56"/>
        <end position="67"/>
    </location>
</feature>
<feature type="transmembrane region" description="Helical; Name=2" evidence="2">
    <location>
        <begin position="68"/>
        <end position="92"/>
    </location>
</feature>
<feature type="topological domain" description="Extracellular">
    <location>
        <begin position="93"/>
        <end position="107"/>
    </location>
</feature>
<feature type="transmembrane region" description="Helical; Name=3" evidence="2">
    <location>
        <begin position="108"/>
        <end position="127"/>
    </location>
</feature>
<feature type="topological domain" description="Cytoplasmic">
    <location>
        <begin position="128"/>
        <end position="146"/>
    </location>
</feature>
<feature type="transmembrane region" description="Helical; Name=4" evidence="2">
    <location>
        <begin position="147"/>
        <end position="170"/>
    </location>
</feature>
<feature type="topological domain" description="Extracellular">
    <location>
        <begin position="171"/>
        <end position="194"/>
    </location>
</feature>
<feature type="transmembrane region" description="Helical; Name=5" evidence="2">
    <location>
        <begin position="195"/>
        <end position="222"/>
    </location>
</feature>
<feature type="topological domain" description="Cytoplasmic">
    <location>
        <begin position="223"/>
        <end position="244"/>
    </location>
</feature>
<feature type="transmembrane region" description="Helical; Name=6" evidence="2">
    <location>
        <begin position="245"/>
        <end position="268"/>
    </location>
</feature>
<feature type="topological domain" description="Extracellular">
    <location>
        <begin position="269"/>
        <end position="276"/>
    </location>
</feature>
<feature type="transmembrane region" description="Helical; Name=7" evidence="2">
    <location>
        <begin position="277"/>
        <end position="301"/>
    </location>
</feature>
<feature type="topological domain" description="Cytoplasmic">
    <location>
        <begin position="302"/>
        <end position="351"/>
    </location>
</feature>
<feature type="modified residue" description="N6-(retinylidene)lysine">
    <location>
        <position position="288"/>
    </location>
</feature>
<feature type="lipid moiety-binding region" description="S-palmitoyl cysteine" evidence="1">
    <location>
        <position position="314"/>
    </location>
</feature>
<feature type="lipid moiety-binding region" description="S-palmitoyl cysteine" evidence="1">
    <location>
        <position position="315"/>
    </location>
</feature>
<feature type="glycosylation site" description="N-linked (GlcNAc...) asparagine" evidence="2">
    <location>
        <position position="4"/>
    </location>
</feature>
<feature type="glycosylation site" description="N-linked (GlcNAc...) asparagine" evidence="2">
    <location>
        <position position="192"/>
    </location>
</feature>
<feature type="disulfide bond" evidence="3">
    <location>
        <begin position="104"/>
        <end position="181"/>
    </location>
</feature>
<feature type="sequence conflict" description="In Ref. 3; AAB47565." evidence="4" ref="3">
    <original>Q</original>
    <variation>W</variation>
    <location>
        <position position="28"/>
    </location>
</feature>
<feature type="sequence conflict" description="In Ref. 2; AAA64223." evidence="4" ref="2">
    <original>K</original>
    <variation>R</variation>
    <location>
        <position position="135"/>
    </location>
</feature>
<feature type="sequence conflict" description="In Ref. 2; AAA64223." evidence="4" ref="2">
    <original>A</original>
    <variation>T</variation>
    <location>
        <position position="163"/>
    </location>
</feature>